<accession>B0C5Z6</accession>
<gene>
    <name type="ordered locus">AM1_5042</name>
</gene>
<comment type="subcellular location">
    <subcellularLocation>
        <location evidence="1">Cell membrane</location>
        <topology evidence="1">Multi-pass membrane protein</topology>
    </subcellularLocation>
</comment>
<comment type="similarity">
    <text evidence="1">Belongs to the UPF0391 family.</text>
</comment>
<organism>
    <name type="scientific">Acaryochloris marina (strain MBIC 11017)</name>
    <dbReference type="NCBI Taxonomy" id="329726"/>
    <lineage>
        <taxon>Bacteria</taxon>
        <taxon>Bacillati</taxon>
        <taxon>Cyanobacteriota</taxon>
        <taxon>Cyanophyceae</taxon>
        <taxon>Acaryochloridales</taxon>
        <taxon>Acaryochloridaceae</taxon>
        <taxon>Acaryochloris</taxon>
    </lineage>
</organism>
<proteinExistence type="inferred from homology"/>
<sequence length="66" mass="7082">MLNLTLTFLVVALIAAFLGFSGIAASAAAIAKILFCIFIVCFILVWPNKTGLVPVQEYPGRSCLHL</sequence>
<name>Y5042_ACAM1</name>
<dbReference type="EMBL" id="CP000828">
    <property type="protein sequence ID" value="ABW30008.1"/>
    <property type="molecule type" value="Genomic_DNA"/>
</dbReference>
<dbReference type="RefSeq" id="WP_012165279.1">
    <property type="nucleotide sequence ID" value="NC_009925.1"/>
</dbReference>
<dbReference type="SMR" id="B0C5Z6"/>
<dbReference type="STRING" id="329726.AM1_5042"/>
<dbReference type="KEGG" id="amr:AM1_5042"/>
<dbReference type="HOGENOM" id="CLU_187346_1_1_3"/>
<dbReference type="Proteomes" id="UP000000268">
    <property type="component" value="Chromosome"/>
</dbReference>
<dbReference type="GO" id="GO:0005886">
    <property type="term" value="C:plasma membrane"/>
    <property type="evidence" value="ECO:0007669"/>
    <property type="project" value="UniProtKB-SubCell"/>
</dbReference>
<dbReference type="HAMAP" id="MF_01361">
    <property type="entry name" value="UPF0391"/>
    <property type="match status" value="1"/>
</dbReference>
<dbReference type="InterPro" id="IPR009760">
    <property type="entry name" value="DUF1328"/>
</dbReference>
<dbReference type="NCBIfam" id="NF010229">
    <property type="entry name" value="PRK13682.1-4"/>
    <property type="match status" value="1"/>
</dbReference>
<dbReference type="Pfam" id="PF07043">
    <property type="entry name" value="DUF1328"/>
    <property type="match status" value="1"/>
</dbReference>
<feature type="chain" id="PRO_1000086959" description="UPF0391 membrane protein AM1_5042">
    <location>
        <begin position="1"/>
        <end position="66"/>
    </location>
</feature>
<feature type="transmembrane region" description="Helical" evidence="1">
    <location>
        <begin position="4"/>
        <end position="24"/>
    </location>
</feature>
<feature type="transmembrane region" description="Helical" evidence="1">
    <location>
        <begin position="28"/>
        <end position="47"/>
    </location>
</feature>
<keyword id="KW-1003">Cell membrane</keyword>
<keyword id="KW-0472">Membrane</keyword>
<keyword id="KW-1185">Reference proteome</keyword>
<keyword id="KW-0812">Transmembrane</keyword>
<keyword id="KW-1133">Transmembrane helix</keyword>
<protein>
    <recommendedName>
        <fullName evidence="1">UPF0391 membrane protein AM1_5042</fullName>
    </recommendedName>
</protein>
<evidence type="ECO:0000255" key="1">
    <source>
        <dbReference type="HAMAP-Rule" id="MF_01361"/>
    </source>
</evidence>
<reference key="1">
    <citation type="journal article" date="2008" name="Proc. Natl. Acad. Sci. U.S.A.">
        <title>Niche adaptation and genome expansion in the chlorophyll d-producing cyanobacterium Acaryochloris marina.</title>
        <authorList>
            <person name="Swingley W.D."/>
            <person name="Chen M."/>
            <person name="Cheung P.C."/>
            <person name="Conrad A.L."/>
            <person name="Dejesa L.C."/>
            <person name="Hao J."/>
            <person name="Honchak B.M."/>
            <person name="Karbach L.E."/>
            <person name="Kurdoglu A."/>
            <person name="Lahiri S."/>
            <person name="Mastrian S.D."/>
            <person name="Miyashita H."/>
            <person name="Page L."/>
            <person name="Ramakrishna P."/>
            <person name="Satoh S."/>
            <person name="Sattley W.M."/>
            <person name="Shimada Y."/>
            <person name="Taylor H.L."/>
            <person name="Tomo T."/>
            <person name="Tsuchiya T."/>
            <person name="Wang Z.T."/>
            <person name="Raymond J."/>
            <person name="Mimuro M."/>
            <person name="Blankenship R.E."/>
            <person name="Touchman J.W."/>
        </authorList>
    </citation>
    <scope>NUCLEOTIDE SEQUENCE [LARGE SCALE GENOMIC DNA]</scope>
    <source>
        <strain>MBIC 11017</strain>
    </source>
</reference>